<gene>
    <name evidence="1" type="primary">ftsH</name>
    <name type="ordered locus">Rxyl_1806</name>
</gene>
<name>FTSH_RUBXD</name>
<feature type="chain" id="PRO_0000400387" description="ATP-dependent zinc metalloprotease FtsH">
    <location>
        <begin position="1"/>
        <end position="651"/>
    </location>
</feature>
<feature type="topological domain" description="Extracellular" evidence="1">
    <location>
        <begin position="1"/>
        <end position="134"/>
    </location>
</feature>
<feature type="transmembrane region" description="Helical" evidence="1">
    <location>
        <begin position="135"/>
        <end position="155"/>
    </location>
</feature>
<feature type="topological domain" description="Cytoplasmic" evidence="1">
    <location>
        <begin position="156"/>
        <end position="651"/>
    </location>
</feature>
<feature type="active site" evidence="1">
    <location>
        <position position="452"/>
    </location>
</feature>
<feature type="binding site" evidence="1">
    <location>
        <begin position="229"/>
        <end position="236"/>
    </location>
    <ligand>
        <name>ATP</name>
        <dbReference type="ChEBI" id="CHEBI:30616"/>
    </ligand>
</feature>
<feature type="binding site" evidence="1">
    <location>
        <position position="451"/>
    </location>
    <ligand>
        <name>Zn(2+)</name>
        <dbReference type="ChEBI" id="CHEBI:29105"/>
        <note>catalytic</note>
    </ligand>
</feature>
<feature type="binding site" evidence="1">
    <location>
        <position position="455"/>
    </location>
    <ligand>
        <name>Zn(2+)</name>
        <dbReference type="ChEBI" id="CHEBI:29105"/>
        <note>catalytic</note>
    </ligand>
</feature>
<feature type="binding site" evidence="1">
    <location>
        <position position="527"/>
    </location>
    <ligand>
        <name>Zn(2+)</name>
        <dbReference type="ChEBI" id="CHEBI:29105"/>
        <note>catalytic</note>
    </ligand>
</feature>
<protein>
    <recommendedName>
        <fullName evidence="1">ATP-dependent zinc metalloprotease FtsH</fullName>
        <ecNumber evidence="1">3.4.24.-</ecNumber>
    </recommendedName>
</protein>
<sequence length="651" mass="71228">MIVFATILFGALSAEDPDVEKLDSQEFQRAVEERAFALGPEDHAPAGGEGQGAAGHRELRHPVGRAPSGGAGSDLEPGPLKVYDESQKVTGLLKPEGGGEPREFEYSYPEGYDIARVLNEANIPFTTDPQTAGPWARAIAVMAPFVLILLLFFLMTRTGRSASQSSRMTDFGKSRARRMTKDQPKVTFADVAGADEAVQELTEIKEFLENPQKFQKLGARIPKGALLVGPPGTGKTLLARAVAGEAGVPFFSISGSDFVEMFVGVGASRVRDLFEQAKQNSPCIIFVDEIDAVGRQRGAGLGGGHDEREQTLNQLLVEMDGFDSKSGIIMLAATNRPDILDPALLRPGRFDRQIVVDRPDLPGRIKILKVHTRGKPLGEDVDIETIARGTPGFTGADLANLVNEAALLAARHNKEQIEMAEMEEAIDRVIAGPERKTRLISEKEKEITAYHEAGHAIVGALLPEADPVHKVTIIPRGQALGVTMSLPEEDRFMMSRAQLMAQLSYMLGGRAAERVVFEEITTGASNDIERATKVARQMVTRYGMSEKLGLIALGQHDGQVFMGRDLHAQPDYSDEIAFQIDKEIRRLVDEAYDTAEDLLVRNRRLLEKLASDLIEYETVDAEHLRRLVEEYAVDEHPSRGRPAMSVNGHRG</sequence>
<reference key="1">
    <citation type="submission" date="2006-06" db="EMBL/GenBank/DDBJ databases">
        <title>Complete sequence of Rubrobacter xylanophilus DSM 9941.</title>
        <authorList>
            <consortium name="US DOE Joint Genome Institute"/>
            <person name="Copeland A."/>
            <person name="Lucas S."/>
            <person name="Lapidus A."/>
            <person name="Barry K."/>
            <person name="Detter J.C."/>
            <person name="Glavina del Rio T."/>
            <person name="Hammon N."/>
            <person name="Israni S."/>
            <person name="Dalin E."/>
            <person name="Tice H."/>
            <person name="Pitluck S."/>
            <person name="Munk A.C."/>
            <person name="Brettin T."/>
            <person name="Bruce D."/>
            <person name="Han C."/>
            <person name="Tapia R."/>
            <person name="Gilna P."/>
            <person name="Schmutz J."/>
            <person name="Larimer F."/>
            <person name="Land M."/>
            <person name="Hauser L."/>
            <person name="Kyrpides N."/>
            <person name="Lykidis A."/>
            <person name="da Costa M.S."/>
            <person name="Rainey F.A."/>
            <person name="Empadinhas N."/>
            <person name="Jolivet E."/>
            <person name="Battista J.R."/>
            <person name="Richardson P."/>
        </authorList>
    </citation>
    <scope>NUCLEOTIDE SEQUENCE [LARGE SCALE GENOMIC DNA]</scope>
    <source>
        <strain>DSM 9941 / JCM 11954 / NBRC 16129 / PRD-1</strain>
    </source>
</reference>
<accession>Q1AV13</accession>
<proteinExistence type="inferred from homology"/>
<comment type="function">
    <text evidence="1">Acts as a processive, ATP-dependent zinc metallopeptidase for both cytoplasmic and membrane proteins. Plays a role in the quality control of integral membrane proteins.</text>
</comment>
<comment type="cofactor">
    <cofactor evidence="1">
        <name>Zn(2+)</name>
        <dbReference type="ChEBI" id="CHEBI:29105"/>
    </cofactor>
    <text evidence="1">Binds 1 zinc ion per subunit.</text>
</comment>
<comment type="subunit">
    <text evidence="1">Homohexamer.</text>
</comment>
<comment type="subcellular location">
    <subcellularLocation>
        <location evidence="1">Cell membrane</location>
        <topology evidence="1">Single-pass membrane protein</topology>
        <orientation evidence="1">Cytoplasmic side</orientation>
    </subcellularLocation>
</comment>
<comment type="similarity">
    <text evidence="1">In the central section; belongs to the AAA ATPase family.</text>
</comment>
<comment type="similarity">
    <text evidence="1">In the C-terminal section; belongs to the peptidase M41 family.</text>
</comment>
<keyword id="KW-0067">ATP-binding</keyword>
<keyword id="KW-1003">Cell membrane</keyword>
<keyword id="KW-0378">Hydrolase</keyword>
<keyword id="KW-0472">Membrane</keyword>
<keyword id="KW-0479">Metal-binding</keyword>
<keyword id="KW-0482">Metalloprotease</keyword>
<keyword id="KW-0547">Nucleotide-binding</keyword>
<keyword id="KW-0645">Protease</keyword>
<keyword id="KW-1185">Reference proteome</keyword>
<keyword id="KW-0812">Transmembrane</keyword>
<keyword id="KW-1133">Transmembrane helix</keyword>
<keyword id="KW-0862">Zinc</keyword>
<dbReference type="EC" id="3.4.24.-" evidence="1"/>
<dbReference type="EMBL" id="CP000386">
    <property type="protein sequence ID" value="ABG04765.1"/>
    <property type="molecule type" value="Genomic_DNA"/>
</dbReference>
<dbReference type="RefSeq" id="WP_011564781.1">
    <property type="nucleotide sequence ID" value="NC_008148.1"/>
</dbReference>
<dbReference type="SMR" id="Q1AV13"/>
<dbReference type="STRING" id="266117.Rxyl_1806"/>
<dbReference type="MEROPS" id="M41.009"/>
<dbReference type="KEGG" id="rxy:Rxyl_1806"/>
<dbReference type="eggNOG" id="COG0465">
    <property type="taxonomic scope" value="Bacteria"/>
</dbReference>
<dbReference type="HOGENOM" id="CLU_000688_16_2_11"/>
<dbReference type="OrthoDB" id="9809379at2"/>
<dbReference type="PhylomeDB" id="Q1AV13"/>
<dbReference type="Proteomes" id="UP000006637">
    <property type="component" value="Chromosome"/>
</dbReference>
<dbReference type="GO" id="GO:0005886">
    <property type="term" value="C:plasma membrane"/>
    <property type="evidence" value="ECO:0007669"/>
    <property type="project" value="UniProtKB-SubCell"/>
</dbReference>
<dbReference type="GO" id="GO:0005524">
    <property type="term" value="F:ATP binding"/>
    <property type="evidence" value="ECO:0007669"/>
    <property type="project" value="UniProtKB-UniRule"/>
</dbReference>
<dbReference type="GO" id="GO:0016887">
    <property type="term" value="F:ATP hydrolysis activity"/>
    <property type="evidence" value="ECO:0007669"/>
    <property type="project" value="UniProtKB-UniRule"/>
</dbReference>
<dbReference type="GO" id="GO:0004176">
    <property type="term" value="F:ATP-dependent peptidase activity"/>
    <property type="evidence" value="ECO:0007669"/>
    <property type="project" value="InterPro"/>
</dbReference>
<dbReference type="GO" id="GO:0004222">
    <property type="term" value="F:metalloendopeptidase activity"/>
    <property type="evidence" value="ECO:0007669"/>
    <property type="project" value="InterPro"/>
</dbReference>
<dbReference type="GO" id="GO:0008270">
    <property type="term" value="F:zinc ion binding"/>
    <property type="evidence" value="ECO:0007669"/>
    <property type="project" value="UniProtKB-UniRule"/>
</dbReference>
<dbReference type="GO" id="GO:0030163">
    <property type="term" value="P:protein catabolic process"/>
    <property type="evidence" value="ECO:0007669"/>
    <property type="project" value="UniProtKB-UniRule"/>
</dbReference>
<dbReference type="GO" id="GO:0006508">
    <property type="term" value="P:proteolysis"/>
    <property type="evidence" value="ECO:0007669"/>
    <property type="project" value="UniProtKB-KW"/>
</dbReference>
<dbReference type="CDD" id="cd19501">
    <property type="entry name" value="RecA-like_FtsH"/>
    <property type="match status" value="1"/>
</dbReference>
<dbReference type="FunFam" id="1.10.8.60:FF:000001">
    <property type="entry name" value="ATP-dependent zinc metalloprotease FtsH"/>
    <property type="match status" value="1"/>
</dbReference>
<dbReference type="FunFam" id="1.20.58.760:FF:000001">
    <property type="entry name" value="ATP-dependent zinc metalloprotease FtsH"/>
    <property type="match status" value="1"/>
</dbReference>
<dbReference type="FunFam" id="3.40.50.300:FF:000001">
    <property type="entry name" value="ATP-dependent zinc metalloprotease FtsH"/>
    <property type="match status" value="1"/>
</dbReference>
<dbReference type="Gene3D" id="1.10.8.60">
    <property type="match status" value="1"/>
</dbReference>
<dbReference type="Gene3D" id="3.40.50.300">
    <property type="entry name" value="P-loop containing nucleotide triphosphate hydrolases"/>
    <property type="match status" value="1"/>
</dbReference>
<dbReference type="Gene3D" id="1.20.58.760">
    <property type="entry name" value="Peptidase M41"/>
    <property type="match status" value="1"/>
</dbReference>
<dbReference type="HAMAP" id="MF_01458">
    <property type="entry name" value="FtsH"/>
    <property type="match status" value="1"/>
</dbReference>
<dbReference type="InterPro" id="IPR003593">
    <property type="entry name" value="AAA+_ATPase"/>
</dbReference>
<dbReference type="InterPro" id="IPR041569">
    <property type="entry name" value="AAA_lid_3"/>
</dbReference>
<dbReference type="InterPro" id="IPR003959">
    <property type="entry name" value="ATPase_AAA_core"/>
</dbReference>
<dbReference type="InterPro" id="IPR003960">
    <property type="entry name" value="ATPase_AAA_CS"/>
</dbReference>
<dbReference type="InterPro" id="IPR005936">
    <property type="entry name" value="FtsH"/>
</dbReference>
<dbReference type="InterPro" id="IPR027417">
    <property type="entry name" value="P-loop_NTPase"/>
</dbReference>
<dbReference type="InterPro" id="IPR000642">
    <property type="entry name" value="Peptidase_M41"/>
</dbReference>
<dbReference type="InterPro" id="IPR037219">
    <property type="entry name" value="Peptidase_M41-like"/>
</dbReference>
<dbReference type="NCBIfam" id="TIGR01241">
    <property type="entry name" value="FtsH_fam"/>
    <property type="match status" value="1"/>
</dbReference>
<dbReference type="PANTHER" id="PTHR23076:SF97">
    <property type="entry name" value="ATP-DEPENDENT ZINC METALLOPROTEASE YME1L1"/>
    <property type="match status" value="1"/>
</dbReference>
<dbReference type="PANTHER" id="PTHR23076">
    <property type="entry name" value="METALLOPROTEASE M41 FTSH"/>
    <property type="match status" value="1"/>
</dbReference>
<dbReference type="Pfam" id="PF00004">
    <property type="entry name" value="AAA"/>
    <property type="match status" value="1"/>
</dbReference>
<dbReference type="Pfam" id="PF17862">
    <property type="entry name" value="AAA_lid_3"/>
    <property type="match status" value="1"/>
</dbReference>
<dbReference type="Pfam" id="PF01434">
    <property type="entry name" value="Peptidase_M41"/>
    <property type="match status" value="1"/>
</dbReference>
<dbReference type="SMART" id="SM00382">
    <property type="entry name" value="AAA"/>
    <property type="match status" value="1"/>
</dbReference>
<dbReference type="SUPFAM" id="SSF140990">
    <property type="entry name" value="FtsH protease domain-like"/>
    <property type="match status" value="1"/>
</dbReference>
<dbReference type="SUPFAM" id="SSF52540">
    <property type="entry name" value="P-loop containing nucleoside triphosphate hydrolases"/>
    <property type="match status" value="1"/>
</dbReference>
<dbReference type="PROSITE" id="PS00674">
    <property type="entry name" value="AAA"/>
    <property type="match status" value="1"/>
</dbReference>
<organism>
    <name type="scientific">Rubrobacter xylanophilus (strain DSM 9941 / JCM 11954 / NBRC 16129 / PRD-1)</name>
    <dbReference type="NCBI Taxonomy" id="266117"/>
    <lineage>
        <taxon>Bacteria</taxon>
        <taxon>Bacillati</taxon>
        <taxon>Actinomycetota</taxon>
        <taxon>Rubrobacteria</taxon>
        <taxon>Rubrobacterales</taxon>
        <taxon>Rubrobacteraceae</taxon>
        <taxon>Rubrobacter</taxon>
    </lineage>
</organism>
<evidence type="ECO:0000255" key="1">
    <source>
        <dbReference type="HAMAP-Rule" id="MF_01458"/>
    </source>
</evidence>